<proteinExistence type="inferred from homology"/>
<keyword id="KW-0067">ATP-binding</keyword>
<keyword id="KW-0963">Cytoplasm</keyword>
<keyword id="KW-0235">DNA replication</keyword>
<keyword id="KW-0238">DNA-binding</keyword>
<keyword id="KW-0446">Lipid-binding</keyword>
<keyword id="KW-0547">Nucleotide-binding</keyword>
<keyword id="KW-1185">Reference proteome</keyword>
<sequence>MAAQLNELWQKTINIIKGELTEVSFNTWIKSITPISIDKDSIRLSVPNQFTKEILENRYKDLIINSMKIITTKKYDIAFLISSEEALETDEDQETDTNNVNTDTSSSMLNPKYKFDSFVIGNSNRFAHAACLAVAEAPAKAYNPLFIYGGVGLGKTHLMQAIGHYILDNNPKAKVVYVSSEKFTNELINSIKDDKNVEFRNKYRNVDVLLIDDVQFIAGKERTQEEFFHTFNALHENNKQIILSSDRPPKEIPTLEDRLRSRFEWGLIADIQAPDFETRIAILKKKADVEHLNIPNDVMVYIATQIKSNIRELEGALIRIVAFSSLTNKEISVDLASEALKDIISSKQNKQITIDLIQDVVSSYFNLRIEDFKSARRTKNIAFPRQIAMYLSRKLTDMSLPKIGEAFGGRDHTTVIHAYEKISSALKEDDDLKYTINEITKRFSPK</sequence>
<accession>Q97N35</accession>
<dbReference type="EMBL" id="AE001437">
    <property type="protein sequence ID" value="AAK77988.1"/>
    <property type="molecule type" value="Genomic_DNA"/>
</dbReference>
<dbReference type="PIR" id="A96900">
    <property type="entry name" value="A96900"/>
</dbReference>
<dbReference type="RefSeq" id="NP_346648.1">
    <property type="nucleotide sequence ID" value="NC_003030.1"/>
</dbReference>
<dbReference type="RefSeq" id="WP_010963330.1">
    <property type="nucleotide sequence ID" value="NC_003030.1"/>
</dbReference>
<dbReference type="SMR" id="Q97N35"/>
<dbReference type="STRING" id="272562.CA_C0001"/>
<dbReference type="GeneID" id="44996474"/>
<dbReference type="KEGG" id="cac:CA_C0001"/>
<dbReference type="PATRIC" id="fig|272562.8.peg.180"/>
<dbReference type="eggNOG" id="COG0593">
    <property type="taxonomic scope" value="Bacteria"/>
</dbReference>
<dbReference type="HOGENOM" id="CLU_026910_3_1_9"/>
<dbReference type="OrthoDB" id="9807019at2"/>
<dbReference type="Proteomes" id="UP000000814">
    <property type="component" value="Chromosome"/>
</dbReference>
<dbReference type="GO" id="GO:0005737">
    <property type="term" value="C:cytoplasm"/>
    <property type="evidence" value="ECO:0007669"/>
    <property type="project" value="UniProtKB-SubCell"/>
</dbReference>
<dbReference type="GO" id="GO:0005886">
    <property type="term" value="C:plasma membrane"/>
    <property type="evidence" value="ECO:0007669"/>
    <property type="project" value="TreeGrafter"/>
</dbReference>
<dbReference type="GO" id="GO:0005524">
    <property type="term" value="F:ATP binding"/>
    <property type="evidence" value="ECO:0007669"/>
    <property type="project" value="UniProtKB-UniRule"/>
</dbReference>
<dbReference type="GO" id="GO:0016887">
    <property type="term" value="F:ATP hydrolysis activity"/>
    <property type="evidence" value="ECO:0007669"/>
    <property type="project" value="InterPro"/>
</dbReference>
<dbReference type="GO" id="GO:0003688">
    <property type="term" value="F:DNA replication origin binding"/>
    <property type="evidence" value="ECO:0007669"/>
    <property type="project" value="UniProtKB-UniRule"/>
</dbReference>
<dbReference type="GO" id="GO:0008289">
    <property type="term" value="F:lipid binding"/>
    <property type="evidence" value="ECO:0007669"/>
    <property type="project" value="UniProtKB-KW"/>
</dbReference>
<dbReference type="GO" id="GO:0006270">
    <property type="term" value="P:DNA replication initiation"/>
    <property type="evidence" value="ECO:0007669"/>
    <property type="project" value="UniProtKB-UniRule"/>
</dbReference>
<dbReference type="GO" id="GO:0006275">
    <property type="term" value="P:regulation of DNA replication"/>
    <property type="evidence" value="ECO:0007669"/>
    <property type="project" value="UniProtKB-UniRule"/>
</dbReference>
<dbReference type="CDD" id="cd00009">
    <property type="entry name" value="AAA"/>
    <property type="match status" value="1"/>
</dbReference>
<dbReference type="CDD" id="cd06571">
    <property type="entry name" value="Bac_DnaA_C"/>
    <property type="match status" value="1"/>
</dbReference>
<dbReference type="FunFam" id="1.10.1750.10:FF:000003">
    <property type="entry name" value="Chromosomal replication initiator protein DnaA"/>
    <property type="match status" value="1"/>
</dbReference>
<dbReference type="FunFam" id="1.10.8.60:FF:000003">
    <property type="entry name" value="Chromosomal replication initiator protein DnaA"/>
    <property type="match status" value="1"/>
</dbReference>
<dbReference type="FunFam" id="3.40.50.300:FF:000150">
    <property type="entry name" value="Chromosomal replication initiator protein DnaA"/>
    <property type="match status" value="1"/>
</dbReference>
<dbReference type="Gene3D" id="1.10.1750.10">
    <property type="match status" value="1"/>
</dbReference>
<dbReference type="Gene3D" id="1.10.8.60">
    <property type="match status" value="1"/>
</dbReference>
<dbReference type="Gene3D" id="3.30.300.180">
    <property type="match status" value="1"/>
</dbReference>
<dbReference type="Gene3D" id="3.40.50.300">
    <property type="entry name" value="P-loop containing nucleotide triphosphate hydrolases"/>
    <property type="match status" value="1"/>
</dbReference>
<dbReference type="HAMAP" id="MF_00377">
    <property type="entry name" value="DnaA_bact"/>
    <property type="match status" value="1"/>
</dbReference>
<dbReference type="InterPro" id="IPR003593">
    <property type="entry name" value="AAA+_ATPase"/>
</dbReference>
<dbReference type="InterPro" id="IPR001957">
    <property type="entry name" value="Chromosome_initiator_DnaA"/>
</dbReference>
<dbReference type="InterPro" id="IPR020591">
    <property type="entry name" value="Chromosome_initiator_DnaA-like"/>
</dbReference>
<dbReference type="InterPro" id="IPR018312">
    <property type="entry name" value="Chromosome_initiator_DnaA_CS"/>
</dbReference>
<dbReference type="InterPro" id="IPR013159">
    <property type="entry name" value="DnaA_C"/>
</dbReference>
<dbReference type="InterPro" id="IPR013317">
    <property type="entry name" value="DnaA_dom"/>
</dbReference>
<dbReference type="InterPro" id="IPR024633">
    <property type="entry name" value="DnaA_N_dom"/>
</dbReference>
<dbReference type="InterPro" id="IPR038454">
    <property type="entry name" value="DnaA_N_sf"/>
</dbReference>
<dbReference type="InterPro" id="IPR027417">
    <property type="entry name" value="P-loop_NTPase"/>
</dbReference>
<dbReference type="InterPro" id="IPR010921">
    <property type="entry name" value="Trp_repressor/repl_initiator"/>
</dbReference>
<dbReference type="NCBIfam" id="TIGR00362">
    <property type="entry name" value="DnaA"/>
    <property type="match status" value="1"/>
</dbReference>
<dbReference type="NCBIfam" id="NF010686">
    <property type="entry name" value="PRK14086.1"/>
    <property type="match status" value="1"/>
</dbReference>
<dbReference type="PANTHER" id="PTHR30050">
    <property type="entry name" value="CHROMOSOMAL REPLICATION INITIATOR PROTEIN DNAA"/>
    <property type="match status" value="1"/>
</dbReference>
<dbReference type="PANTHER" id="PTHR30050:SF2">
    <property type="entry name" value="CHROMOSOMAL REPLICATION INITIATOR PROTEIN DNAA"/>
    <property type="match status" value="1"/>
</dbReference>
<dbReference type="Pfam" id="PF00308">
    <property type="entry name" value="Bac_DnaA"/>
    <property type="match status" value="1"/>
</dbReference>
<dbReference type="Pfam" id="PF08299">
    <property type="entry name" value="Bac_DnaA_C"/>
    <property type="match status" value="1"/>
</dbReference>
<dbReference type="Pfam" id="PF11638">
    <property type="entry name" value="DnaA_N"/>
    <property type="match status" value="1"/>
</dbReference>
<dbReference type="PRINTS" id="PR00051">
    <property type="entry name" value="DNAA"/>
</dbReference>
<dbReference type="SMART" id="SM00382">
    <property type="entry name" value="AAA"/>
    <property type="match status" value="1"/>
</dbReference>
<dbReference type="SMART" id="SM00760">
    <property type="entry name" value="Bac_DnaA_C"/>
    <property type="match status" value="1"/>
</dbReference>
<dbReference type="SUPFAM" id="SSF52540">
    <property type="entry name" value="P-loop containing nucleoside triphosphate hydrolases"/>
    <property type="match status" value="1"/>
</dbReference>
<dbReference type="SUPFAM" id="SSF48295">
    <property type="entry name" value="TrpR-like"/>
    <property type="match status" value="1"/>
</dbReference>
<dbReference type="PROSITE" id="PS01008">
    <property type="entry name" value="DNAA"/>
    <property type="match status" value="1"/>
</dbReference>
<reference key="1">
    <citation type="journal article" date="2001" name="J. Bacteriol.">
        <title>Genome sequence and comparative analysis of the solvent-producing bacterium Clostridium acetobutylicum.</title>
        <authorList>
            <person name="Noelling J."/>
            <person name="Breton G."/>
            <person name="Omelchenko M.V."/>
            <person name="Makarova K.S."/>
            <person name="Zeng Q."/>
            <person name="Gibson R."/>
            <person name="Lee H.M."/>
            <person name="Dubois J."/>
            <person name="Qiu D."/>
            <person name="Hitti J."/>
            <person name="Wolf Y.I."/>
            <person name="Tatusov R.L."/>
            <person name="Sabathe F."/>
            <person name="Doucette-Stamm L.A."/>
            <person name="Soucaille P."/>
            <person name="Daly M.J."/>
            <person name="Bennett G.N."/>
            <person name="Koonin E.V."/>
            <person name="Smith D.R."/>
        </authorList>
    </citation>
    <scope>NUCLEOTIDE SEQUENCE [LARGE SCALE GENOMIC DNA]</scope>
    <source>
        <strain>ATCC 824 / DSM 792 / JCM 1419 / IAM 19013 / LMG 5710 / NBRC 13948 / NRRL B-527 / VKM B-1787 / 2291 / W</strain>
    </source>
</reference>
<organism>
    <name type="scientific">Clostridium acetobutylicum (strain ATCC 824 / DSM 792 / JCM 1419 / IAM 19013 / LMG 5710 / NBRC 13948 / NRRL B-527 / VKM B-1787 / 2291 / W)</name>
    <dbReference type="NCBI Taxonomy" id="272562"/>
    <lineage>
        <taxon>Bacteria</taxon>
        <taxon>Bacillati</taxon>
        <taxon>Bacillota</taxon>
        <taxon>Clostridia</taxon>
        <taxon>Eubacteriales</taxon>
        <taxon>Clostridiaceae</taxon>
        <taxon>Clostridium</taxon>
    </lineage>
</organism>
<protein>
    <recommendedName>
        <fullName evidence="1">Chromosomal replication initiator protein DnaA</fullName>
    </recommendedName>
</protein>
<feature type="chain" id="PRO_0000114165" description="Chromosomal replication initiator protein DnaA">
    <location>
        <begin position="1"/>
        <end position="446"/>
    </location>
</feature>
<feature type="region of interest" description="Domain I, interacts with DnaA modulators" evidence="1">
    <location>
        <begin position="1"/>
        <end position="73"/>
    </location>
</feature>
<feature type="region of interest" description="Domain II" evidence="1">
    <location>
        <begin position="73"/>
        <end position="107"/>
    </location>
</feature>
<feature type="region of interest" description="Domain III, AAA+ region" evidence="1">
    <location>
        <begin position="108"/>
        <end position="324"/>
    </location>
</feature>
<feature type="region of interest" description="Domain IV, binds dsDNA" evidence="1">
    <location>
        <begin position="325"/>
        <end position="446"/>
    </location>
</feature>
<feature type="binding site" evidence="1">
    <location>
        <position position="152"/>
    </location>
    <ligand>
        <name>ATP</name>
        <dbReference type="ChEBI" id="CHEBI:30616"/>
    </ligand>
</feature>
<feature type="binding site" evidence="1">
    <location>
        <position position="154"/>
    </location>
    <ligand>
        <name>ATP</name>
        <dbReference type="ChEBI" id="CHEBI:30616"/>
    </ligand>
</feature>
<feature type="binding site" evidence="1">
    <location>
        <position position="155"/>
    </location>
    <ligand>
        <name>ATP</name>
        <dbReference type="ChEBI" id="CHEBI:30616"/>
    </ligand>
</feature>
<feature type="binding site" evidence="1">
    <location>
        <position position="156"/>
    </location>
    <ligand>
        <name>ATP</name>
        <dbReference type="ChEBI" id="CHEBI:30616"/>
    </ligand>
</feature>
<evidence type="ECO:0000255" key="1">
    <source>
        <dbReference type="HAMAP-Rule" id="MF_00377"/>
    </source>
</evidence>
<name>DNAA_CLOAB</name>
<comment type="function">
    <text evidence="1">Plays an essential role in the initiation and regulation of chromosomal replication. ATP-DnaA binds to the origin of replication (oriC) to initiate formation of the DNA replication initiation complex once per cell cycle. Binds the DnaA box (a 9 base pair repeat at the origin) and separates the double-stranded (ds)DNA. Forms a right-handed helical filament on oriC DNA; dsDNA binds to the exterior of the filament while single-stranded (ss)DNA is stabiized in the filament's interior. The ATP-DnaA-oriC complex binds and stabilizes one strand of the AT-rich DNA unwinding element (DUE), permitting loading of DNA polymerase. After initiation quickly degrades to an ADP-DnaA complex that is not apt for DNA replication. Binds acidic phospholipids.</text>
</comment>
<comment type="subunit">
    <text evidence="1">Oligomerizes as a right-handed, spiral filament on DNA at oriC.</text>
</comment>
<comment type="subcellular location">
    <subcellularLocation>
        <location evidence="1">Cytoplasm</location>
    </subcellularLocation>
</comment>
<comment type="domain">
    <text evidence="1">Domain I is involved in oligomerization and binding regulators, domain II is flexibile and of varying length in different bacteria, domain III forms the AAA+ region, while domain IV binds dsDNA.</text>
</comment>
<comment type="similarity">
    <text evidence="1">Belongs to the DnaA family.</text>
</comment>
<gene>
    <name evidence="1" type="primary">dnaA</name>
    <name type="ordered locus">CA_C0001</name>
</gene>